<comment type="function">
    <text evidence="3 5 9">Vacuolar iron transporter involved in the transfer of iron ions from the cytosol to the vacuole for intracellular iron storage (PubMed:17082420, PubMed:26232490). Involved in regulation of cellular iron homeostasis (PubMed:17082420, PubMed:26232490). Vacuolar iron storage is required for seed embryo and seedling development (Probable) (PubMed:17082420, PubMed:26232490).</text>
</comment>
<comment type="catalytic activity">
    <reaction evidence="3">
        <text>Fe(2+)(in) = Fe(2+)(out)</text>
        <dbReference type="Rhea" id="RHEA:28486"/>
        <dbReference type="ChEBI" id="CHEBI:29033"/>
    </reaction>
    <physiologicalReaction direction="left-to-right" evidence="8">
        <dbReference type="Rhea" id="RHEA:28487"/>
    </physiologicalReaction>
</comment>
<comment type="subunit">
    <text evidence="1">Homodimer. The dimeric interaction is mediated by both the transmembrane domains (TMDs) and the cytoplasmic metal binding domain (MBD).</text>
</comment>
<comment type="subcellular location">
    <subcellularLocation>
        <location evidence="3">Vacuole membrane</location>
        <topology evidence="2">Multi-pass membrane protein</topology>
    </subcellularLocation>
</comment>
<comment type="tissue specificity">
    <text evidence="3">Highly expressed in developing embryo and seed. Expressed in young seedlings, predominantly in the vasculature.</text>
</comment>
<comment type="domain">
    <text evidence="1">The cytoplasmic metal binding domain (MBD) is located between transmembrane 2 (TM2) and transmembrane 3 (TM3).</text>
</comment>
<comment type="disruption phenotype">
    <text evidence="3">No visible phenotype under normal growth condition, but important reduced growth and leaves with severe chlorosis when grown on soil at pH 7.9 that causes limited iron availability.</text>
</comment>
<comment type="biotechnology">
    <text evidence="6">Over-expression of the Arabidopsis vacuolar iron transporter 1 (VIT1) in cassava plants (Manihot esculenta) increases accumulation of iron in cassava roots and stems (PubMed:26475197). A transgenic approach to increase vacuolar iron sequestration in cassava may represent a viable strategy to biofortify crops in micronutrients (PubMed:26475197).</text>
</comment>
<comment type="miscellaneous">
    <text evidence="3 4 5">Can mediate sequestration of iron ions into vacuoles when expressed in the yeast ccc1 mutant (PubMed:17082420, PubMed:26232490). In seeds, iron is strongly localized to the provascular strands of the hypocotyl, radicle, and cotyledons, but completely absent from these cells in vit1-1 mutant (PubMed:17082420). In dry seeds, vit1-1 mutation provokes the redistribution of iron in cortex cells of the hypocotyls and in a single subepidermal cell layer in the cotyledons (PubMed:19726572).</text>
</comment>
<comment type="similarity">
    <text evidence="8">Belongs to the CCC1 family.</text>
</comment>
<reference key="1">
    <citation type="journal article" date="2006" name="Science">
        <title>Localization of iron in Arabidopsis seed requires the vacuolar membrane transporter VIT1.</title>
        <authorList>
            <person name="Kim S.A."/>
            <person name="Punshon T."/>
            <person name="Lanzirotti A."/>
            <person name="Li L."/>
            <person name="Alonso J.M."/>
            <person name="Ecker J.R."/>
            <person name="Kaplan J."/>
            <person name="Guerinot M.L."/>
        </authorList>
    </citation>
    <scope>NUCLEOTIDE SEQUENCE [MRNA]</scope>
    <scope>FUNCTION</scope>
    <scope>TRANSPORTER ACTIVITY</scope>
    <scope>SUBCELLULAR LOCATION</scope>
    <scope>TISSUE SPECIFICITY</scope>
    <scope>DISRUPTION PHENOTYPE</scope>
</reference>
<reference key="2">
    <citation type="journal article" date="1999" name="Nature">
        <title>Sequence and analysis of chromosome 2 of the plant Arabidopsis thaliana.</title>
        <authorList>
            <person name="Lin X."/>
            <person name="Kaul S."/>
            <person name="Rounsley S.D."/>
            <person name="Shea T.P."/>
            <person name="Benito M.-I."/>
            <person name="Town C.D."/>
            <person name="Fujii C.Y."/>
            <person name="Mason T.M."/>
            <person name="Bowman C.L."/>
            <person name="Barnstead M.E."/>
            <person name="Feldblyum T.V."/>
            <person name="Buell C.R."/>
            <person name="Ketchum K.A."/>
            <person name="Lee J.J."/>
            <person name="Ronning C.M."/>
            <person name="Koo H.L."/>
            <person name="Moffat K.S."/>
            <person name="Cronin L.A."/>
            <person name="Shen M."/>
            <person name="Pai G."/>
            <person name="Van Aken S."/>
            <person name="Umayam L."/>
            <person name="Tallon L.J."/>
            <person name="Gill J.E."/>
            <person name="Adams M.D."/>
            <person name="Carrera A.J."/>
            <person name="Creasy T.H."/>
            <person name="Goodman H.M."/>
            <person name="Somerville C.R."/>
            <person name="Copenhaver G.P."/>
            <person name="Preuss D."/>
            <person name="Nierman W.C."/>
            <person name="White O."/>
            <person name="Eisen J.A."/>
            <person name="Salzberg S.L."/>
            <person name="Fraser C.M."/>
            <person name="Venter J.C."/>
        </authorList>
    </citation>
    <scope>NUCLEOTIDE SEQUENCE [LARGE SCALE GENOMIC DNA]</scope>
    <source>
        <strain>cv. Columbia</strain>
    </source>
</reference>
<reference key="3">
    <citation type="journal article" date="2017" name="Plant J.">
        <title>Araport11: a complete reannotation of the Arabidopsis thaliana reference genome.</title>
        <authorList>
            <person name="Cheng C.Y."/>
            <person name="Krishnakumar V."/>
            <person name="Chan A.P."/>
            <person name="Thibaud-Nissen F."/>
            <person name="Schobel S."/>
            <person name="Town C.D."/>
        </authorList>
    </citation>
    <scope>GENOME REANNOTATION</scope>
    <source>
        <strain>cv. Columbia</strain>
    </source>
</reference>
<reference key="4">
    <citation type="submission" date="2006-09" db="EMBL/GenBank/DDBJ databases">
        <title>Arabidopsis ORF clones.</title>
        <authorList>
            <person name="Bautista V.R."/>
            <person name="Kim C.J."/>
            <person name="Chen H."/>
            <person name="Quinitio C."/>
            <person name="Ecker J.R."/>
        </authorList>
    </citation>
    <scope>NUCLEOTIDE SEQUENCE [LARGE SCALE MRNA]</scope>
    <source>
        <strain>cv. Columbia</strain>
    </source>
</reference>
<reference key="5">
    <citation type="journal article" date="2009" name="Plant Physiol.">
        <title>Identification of the endodermal vacuole as the iron storage compartment in the Arabidopsis embryo.</title>
        <authorList>
            <person name="Roschzttardtz H."/>
            <person name="Conejero G."/>
            <person name="Curie C."/>
            <person name="Mari S."/>
        </authorList>
    </citation>
    <scope>FUNCTION</scope>
</reference>
<reference key="6">
    <citation type="journal article" date="2015" name="Plant Physiol.">
        <title>Bypassing iron storage in endodermal vacuoles rescues the iron mobilization defect in the natural resistance associated-macrophage protein3natural resistance associated-macrophage protein4 double mutant.</title>
        <authorList>
            <person name="Mary V."/>
            <person name="Schnell Ramos M."/>
            <person name="Gillet C."/>
            <person name="Socha A.L."/>
            <person name="Giraudat J."/>
            <person name="Agorio A."/>
            <person name="Merlot S."/>
            <person name="Clairet C."/>
            <person name="Kim S.A."/>
            <person name="Punshon T."/>
            <person name="Guerinot M.L."/>
            <person name="Thomine S."/>
        </authorList>
    </citation>
    <scope>FUNCTION</scope>
    <scope>MUTAGENESIS OF GLY-77</scope>
</reference>
<reference key="7">
    <citation type="journal article" date="2015" name="Plant Sci.">
        <title>Overexpression of Arabidopsis VIT1 increases accumulation of iron in cassava roots and stems.</title>
        <authorList>
            <person name="Narayanan N."/>
            <person name="Beyene G."/>
            <person name="Chauhan R.D."/>
            <person name="Gaitan-Solis E."/>
            <person name="Grusak M.A."/>
            <person name="Taylor N."/>
            <person name="Anderson P."/>
        </authorList>
    </citation>
    <scope>BIOTECHNOLOGY</scope>
</reference>
<gene>
    <name evidence="7" type="primary">VIT1</name>
    <name evidence="10" type="ordered locus">At2g01770</name>
    <name evidence="11" type="ORF">T8O11.6</name>
</gene>
<organism>
    <name type="scientific">Arabidopsis thaliana</name>
    <name type="common">Mouse-ear cress</name>
    <dbReference type="NCBI Taxonomy" id="3702"/>
    <lineage>
        <taxon>Eukaryota</taxon>
        <taxon>Viridiplantae</taxon>
        <taxon>Streptophyta</taxon>
        <taxon>Embryophyta</taxon>
        <taxon>Tracheophyta</taxon>
        <taxon>Spermatophyta</taxon>
        <taxon>Magnoliopsida</taxon>
        <taxon>eudicotyledons</taxon>
        <taxon>Gunneridae</taxon>
        <taxon>Pentapetalae</taxon>
        <taxon>rosids</taxon>
        <taxon>malvids</taxon>
        <taxon>Brassicales</taxon>
        <taxon>Brassicaceae</taxon>
        <taxon>Camelineae</taxon>
        <taxon>Arabidopsis</taxon>
    </lineage>
</organism>
<evidence type="ECO:0000250" key="1">
    <source>
        <dbReference type="UniProtKB" id="P0DO17"/>
    </source>
</evidence>
<evidence type="ECO:0000255" key="2"/>
<evidence type="ECO:0000269" key="3">
    <source>
    </source>
</evidence>
<evidence type="ECO:0000269" key="4">
    <source>
    </source>
</evidence>
<evidence type="ECO:0000269" key="5">
    <source>
    </source>
</evidence>
<evidence type="ECO:0000269" key="6">
    <source>
    </source>
</evidence>
<evidence type="ECO:0000303" key="7">
    <source>
    </source>
</evidence>
<evidence type="ECO:0000305" key="8"/>
<evidence type="ECO:0000305" key="9">
    <source>
    </source>
</evidence>
<evidence type="ECO:0000312" key="10">
    <source>
        <dbReference type="Araport" id="AT2G01770"/>
    </source>
</evidence>
<evidence type="ECO:0000312" key="11">
    <source>
        <dbReference type="EMBL" id="AAD12695.1"/>
    </source>
</evidence>
<dbReference type="EMBL" id="AY316134">
    <property type="protein sequence ID" value="AAQ87602.1"/>
    <property type="molecule type" value="mRNA"/>
</dbReference>
<dbReference type="EMBL" id="AC006069">
    <property type="protein sequence ID" value="AAD12695.1"/>
    <property type="molecule type" value="Genomic_DNA"/>
</dbReference>
<dbReference type="EMBL" id="CP002685">
    <property type="protein sequence ID" value="AEC05496.1"/>
    <property type="molecule type" value="Genomic_DNA"/>
</dbReference>
<dbReference type="EMBL" id="BT028987">
    <property type="protein sequence ID" value="ABI93896.1"/>
    <property type="molecule type" value="mRNA"/>
</dbReference>
<dbReference type="PIR" id="H84428">
    <property type="entry name" value="H84428"/>
</dbReference>
<dbReference type="RefSeq" id="NP_178286.1">
    <property type="nucleotide sequence ID" value="NM_126238.3"/>
</dbReference>
<dbReference type="SMR" id="Q9ZUA5"/>
<dbReference type="BioGRID" id="111">
    <property type="interactions" value="16"/>
</dbReference>
<dbReference type="FunCoup" id="Q9ZUA5">
    <property type="interactions" value="25"/>
</dbReference>
<dbReference type="IntAct" id="Q9ZUA5">
    <property type="interactions" value="15"/>
</dbReference>
<dbReference type="STRING" id="3702.Q9ZUA5"/>
<dbReference type="TCDB" id="2.A.89.1.2">
    <property type="family name" value="the vacuolar iron transporter (vit) family"/>
</dbReference>
<dbReference type="PaxDb" id="3702-AT2G01770.1"/>
<dbReference type="ProteomicsDB" id="242563"/>
<dbReference type="EnsemblPlants" id="AT2G01770.1">
    <property type="protein sequence ID" value="AT2G01770.1"/>
    <property type="gene ID" value="AT2G01770"/>
</dbReference>
<dbReference type="GeneID" id="814708"/>
<dbReference type="Gramene" id="AT2G01770.1">
    <property type="protein sequence ID" value="AT2G01770.1"/>
    <property type="gene ID" value="AT2G01770"/>
</dbReference>
<dbReference type="KEGG" id="ath:AT2G01770"/>
<dbReference type="Araport" id="AT2G01770"/>
<dbReference type="TAIR" id="AT2G01770">
    <property type="gene designation" value="VIT1"/>
</dbReference>
<dbReference type="eggNOG" id="KOG4473">
    <property type="taxonomic scope" value="Eukaryota"/>
</dbReference>
<dbReference type="HOGENOM" id="CLU_038957_0_2_1"/>
<dbReference type="InParanoid" id="Q9ZUA5"/>
<dbReference type="OMA" id="MNFHHTL"/>
<dbReference type="PhylomeDB" id="Q9ZUA5"/>
<dbReference type="PRO" id="PR:Q9ZUA5"/>
<dbReference type="Proteomes" id="UP000006548">
    <property type="component" value="Chromosome 2"/>
</dbReference>
<dbReference type="ExpressionAtlas" id="Q9ZUA5">
    <property type="expression patterns" value="baseline and differential"/>
</dbReference>
<dbReference type="GO" id="GO:0005774">
    <property type="term" value="C:vacuolar membrane"/>
    <property type="evidence" value="ECO:0000314"/>
    <property type="project" value="TAIR"/>
</dbReference>
<dbReference type="GO" id="GO:0005384">
    <property type="term" value="F:manganese ion transmembrane transporter activity"/>
    <property type="evidence" value="ECO:0007669"/>
    <property type="project" value="InterPro"/>
</dbReference>
<dbReference type="GO" id="GO:0046872">
    <property type="term" value="F:metal ion binding"/>
    <property type="evidence" value="ECO:0007669"/>
    <property type="project" value="UniProtKB-KW"/>
</dbReference>
<dbReference type="GO" id="GO:0030026">
    <property type="term" value="P:intracellular manganese ion homeostasis"/>
    <property type="evidence" value="ECO:0007669"/>
    <property type="project" value="InterPro"/>
</dbReference>
<dbReference type="GO" id="GO:0006826">
    <property type="term" value="P:iron ion transport"/>
    <property type="evidence" value="ECO:0007669"/>
    <property type="project" value="UniProtKB-KW"/>
</dbReference>
<dbReference type="CDD" id="cd02435">
    <property type="entry name" value="CCC1"/>
    <property type="match status" value="1"/>
</dbReference>
<dbReference type="InterPro" id="IPR008217">
    <property type="entry name" value="Ccc1_fam"/>
</dbReference>
<dbReference type="PANTHER" id="PTHR31851">
    <property type="entry name" value="FE(2+)/MN(2+) TRANSPORTER PCL1"/>
    <property type="match status" value="1"/>
</dbReference>
<dbReference type="Pfam" id="PF01988">
    <property type="entry name" value="VIT1"/>
    <property type="match status" value="1"/>
</dbReference>
<sequence length="250" mass="26860">MSSEEDKITRISIEPEKQTLLDHHTEKHFTAGEIVRDIIIGVSDGLTVPFALAAGLSGANASSSIVLTAGIAEVAAGAISMGLGGYLAAKSEEDHYAREMKREQEEIVAVPETEAAEVAEILAQYGIEPHEYSPVVNALRKNPQAWLDFMMRFELGLEKPDPKRALQSAFTIAIAYVLGGFIPLLPYMLIPHAMDAVVASVVITLFALFIFGYAKGHFTGSKPLRSAFETAFIGAIASAAAFCLAKVVQH</sequence>
<keyword id="KW-0406">Ion transport</keyword>
<keyword id="KW-0408">Iron</keyword>
<keyword id="KW-0410">Iron transport</keyword>
<keyword id="KW-0472">Membrane</keyword>
<keyword id="KW-0479">Metal-binding</keyword>
<keyword id="KW-1185">Reference proteome</keyword>
<keyword id="KW-0812">Transmembrane</keyword>
<keyword id="KW-1133">Transmembrane helix</keyword>
<keyword id="KW-0813">Transport</keyword>
<keyword id="KW-0926">Vacuole</keyword>
<proteinExistence type="evidence at protein level"/>
<feature type="chain" id="PRO_0000411004" description="Vacuolar iron transporter 1">
    <location>
        <begin position="1"/>
        <end position="250"/>
    </location>
</feature>
<feature type="topological domain" description="Cytoplasmic" evidence="2">
    <location>
        <begin position="1"/>
        <end position="37"/>
    </location>
</feature>
<feature type="transmembrane region" description="Helical" evidence="2">
    <location>
        <begin position="38"/>
        <end position="58"/>
    </location>
</feature>
<feature type="topological domain" description="Vacuolar" evidence="2">
    <location>
        <begin position="59"/>
        <end position="64"/>
    </location>
</feature>
<feature type="transmembrane region" description="Helical" evidence="2">
    <location>
        <begin position="65"/>
        <end position="85"/>
    </location>
</feature>
<feature type="topological domain" description="Cytoplasmic" evidence="2">
    <location>
        <begin position="86"/>
        <end position="169"/>
    </location>
</feature>
<feature type="transmembrane region" description="Helical" evidence="2">
    <location>
        <begin position="170"/>
        <end position="190"/>
    </location>
</feature>
<feature type="topological domain" description="Vacuolar" evidence="2">
    <location>
        <begin position="191"/>
        <end position="192"/>
    </location>
</feature>
<feature type="transmembrane region" description="Helical" evidence="2">
    <location>
        <begin position="193"/>
        <end position="213"/>
    </location>
</feature>
<feature type="topological domain" description="Cytoplasmic" evidence="2">
    <location>
        <begin position="214"/>
        <end position="227"/>
    </location>
</feature>
<feature type="transmembrane region" description="Helical" evidence="2">
    <location>
        <begin position="228"/>
        <end position="248"/>
    </location>
</feature>
<feature type="topological domain" description="Vacuolar" evidence="2">
    <location>
        <begin position="249"/>
        <end position="250"/>
    </location>
</feature>
<feature type="region of interest" description="Cytoplasmic metal binding domain (MBD)" evidence="1">
    <location>
        <begin position="91"/>
        <end position="166"/>
    </location>
</feature>
<feature type="binding site" evidence="1">
    <location>
        <position position="103"/>
    </location>
    <ligand>
        <name>Fe cation</name>
        <dbReference type="ChEBI" id="CHEBI:24875"/>
        <label>1</label>
    </ligand>
</feature>
<feature type="binding site" evidence="1">
    <location>
        <position position="103"/>
    </location>
    <ligand>
        <name>Fe cation</name>
        <dbReference type="ChEBI" id="CHEBI:24875"/>
        <label>2</label>
    </ligand>
</feature>
<feature type="binding site" evidence="1">
    <location>
        <position position="106"/>
    </location>
    <ligand>
        <name>Fe cation</name>
        <dbReference type="ChEBI" id="CHEBI:24875"/>
        <label>1</label>
    </ligand>
</feature>
<feature type="binding site" evidence="1">
    <location>
        <position position="106"/>
    </location>
    <ligand>
        <name>Fe cation</name>
        <dbReference type="ChEBI" id="CHEBI:24875"/>
        <label>3</label>
    </ligand>
</feature>
<feature type="binding site" evidence="1">
    <location>
        <position position="114"/>
    </location>
    <ligand>
        <name>Fe cation</name>
        <dbReference type="ChEBI" id="CHEBI:24875"/>
        <label>1</label>
    </ligand>
</feature>
<feature type="binding site" evidence="1">
    <location>
        <position position="114"/>
    </location>
    <ligand>
        <name>Fe cation</name>
        <dbReference type="ChEBI" id="CHEBI:24875"/>
        <label>2</label>
    </ligand>
</feature>
<feature type="binding site" evidence="1">
    <location>
        <position position="114"/>
    </location>
    <ligand>
        <name>Fe cation</name>
        <dbReference type="ChEBI" id="CHEBI:24875"/>
        <label>3</label>
    </ligand>
</feature>
<feature type="binding site" evidence="1">
    <location>
        <position position="117"/>
    </location>
    <ligand>
        <name>Fe cation</name>
        <dbReference type="ChEBI" id="CHEBI:24875"/>
        <label>1</label>
    </ligand>
</feature>
<feature type="binding site" evidence="1">
    <location>
        <position position="117"/>
    </location>
    <ligand>
        <name>Fe cation</name>
        <dbReference type="ChEBI" id="CHEBI:24875"/>
        <label>2</label>
    </ligand>
</feature>
<feature type="binding site" evidence="1">
    <location>
        <position position="117"/>
    </location>
    <ligand>
        <name>Fe cation</name>
        <dbReference type="ChEBI" id="CHEBI:24875"/>
        <label>3</label>
    </ligand>
</feature>
<feature type="binding site" evidence="1">
    <location>
        <position position="150"/>
    </location>
    <ligand>
        <name>Fe cation</name>
        <dbReference type="ChEBI" id="CHEBI:24875"/>
        <label>2</label>
    </ligand>
</feature>
<feature type="binding site" evidence="1">
    <location>
        <position position="154"/>
    </location>
    <ligand>
        <name>Fe cation</name>
        <dbReference type="ChEBI" id="CHEBI:24875"/>
        <label>1</label>
    </ligand>
</feature>
<feature type="mutagenesis site" description="In isv1; Unable to mediate iron ions sequestration into vacuoles in the yeast ccc1 mutant." evidence="5">
    <original>G</original>
    <variation>D</variation>
    <location>
        <position position="77"/>
    </location>
</feature>
<protein>
    <recommendedName>
        <fullName evidence="7">Vacuolar iron transporter 1</fullName>
        <shortName evidence="7">AtVIT1</shortName>
    </recommendedName>
</protein>
<name>VIT1_ARATH</name>
<accession>Q9ZUA5</accession>